<organism>
    <name type="scientific">Bacillus licheniformis (strain ATCC 14580 / DSM 13 / JCM 2505 / CCUG 7422 / NBRC 12200 / NCIMB 9375 / NCTC 10341 / NRRL NRS-1264 / Gibson 46)</name>
    <dbReference type="NCBI Taxonomy" id="279010"/>
    <lineage>
        <taxon>Bacteria</taxon>
        <taxon>Bacillati</taxon>
        <taxon>Bacillota</taxon>
        <taxon>Bacilli</taxon>
        <taxon>Bacillales</taxon>
        <taxon>Bacillaceae</taxon>
        <taxon>Bacillus</taxon>
    </lineage>
</organism>
<reference key="1">
    <citation type="journal article" date="2004" name="J. Mol. Microbiol. Biotechnol.">
        <title>The complete genome sequence of Bacillus licheniformis DSM13, an organism with great industrial potential.</title>
        <authorList>
            <person name="Veith B."/>
            <person name="Herzberg C."/>
            <person name="Steckel S."/>
            <person name="Feesche J."/>
            <person name="Maurer K.H."/>
            <person name="Ehrenreich P."/>
            <person name="Baeumer S."/>
            <person name="Henne A."/>
            <person name="Liesegang H."/>
            <person name="Merkl R."/>
            <person name="Ehrenreich A."/>
            <person name="Gottschalk G."/>
        </authorList>
    </citation>
    <scope>NUCLEOTIDE SEQUENCE [LARGE SCALE GENOMIC DNA]</scope>
    <source>
        <strain>ATCC 14580 / DSM 13 / JCM 2505 / CCUG 7422 / NBRC 12200 / NCIMB 9375 / NCTC 10341 / NRRL NRS-1264 / Gibson 46</strain>
    </source>
</reference>
<reference key="2">
    <citation type="journal article" date="2004" name="Genome Biol.">
        <title>Complete genome sequence of the industrial bacterium Bacillus licheniformis and comparisons with closely related Bacillus species.</title>
        <authorList>
            <person name="Rey M.W."/>
            <person name="Ramaiya P."/>
            <person name="Nelson B.A."/>
            <person name="Brody-Karpin S.D."/>
            <person name="Zaretsky E.J."/>
            <person name="Tang M."/>
            <person name="Lopez de Leon A."/>
            <person name="Xiang H."/>
            <person name="Gusti V."/>
            <person name="Clausen I.G."/>
            <person name="Olsen P.B."/>
            <person name="Rasmussen M.D."/>
            <person name="Andersen J.T."/>
            <person name="Joergensen P.L."/>
            <person name="Larsen T.S."/>
            <person name="Sorokin A."/>
            <person name="Bolotin A."/>
            <person name="Lapidus A."/>
            <person name="Galleron N."/>
            <person name="Ehrlich S.D."/>
            <person name="Berka R.M."/>
        </authorList>
    </citation>
    <scope>NUCLEOTIDE SEQUENCE [LARGE SCALE GENOMIC DNA]</scope>
    <source>
        <strain>ATCC 14580 / DSM 13 / JCM 2505 / CCUG 7422 / NBRC 12200 / NCIMB 9375 / NCTC 10341 / NRRL NRS-1264 / Gibson 46</strain>
    </source>
</reference>
<accession>Q65JA6</accession>
<accession>Q62UR3</accession>
<dbReference type="EMBL" id="AE017333">
    <property type="protein sequence ID" value="AAU40858.1"/>
    <property type="molecule type" value="Genomic_DNA"/>
</dbReference>
<dbReference type="EMBL" id="CP000002">
    <property type="protein sequence ID" value="AAU23496.1"/>
    <property type="molecule type" value="Genomic_DNA"/>
</dbReference>
<dbReference type="RefSeq" id="WP_011197997.1">
    <property type="nucleotide sequence ID" value="NC_006322.1"/>
</dbReference>
<dbReference type="SMR" id="Q65JA6"/>
<dbReference type="STRING" id="279010.BL05177"/>
<dbReference type="GeneID" id="92861443"/>
<dbReference type="KEGG" id="bld:BLi01965"/>
<dbReference type="KEGG" id="bli:BL05177"/>
<dbReference type="eggNOG" id="COG1780">
    <property type="taxonomic scope" value="Bacteria"/>
</dbReference>
<dbReference type="HOGENOM" id="CLU_114845_3_0_9"/>
<dbReference type="Proteomes" id="UP000000606">
    <property type="component" value="Chromosome"/>
</dbReference>
<dbReference type="GO" id="GO:0010181">
    <property type="term" value="F:FMN binding"/>
    <property type="evidence" value="ECO:0007669"/>
    <property type="project" value="InterPro"/>
</dbReference>
<dbReference type="GO" id="GO:0036211">
    <property type="term" value="P:protein modification process"/>
    <property type="evidence" value="ECO:0007669"/>
    <property type="project" value="InterPro"/>
</dbReference>
<dbReference type="Gene3D" id="3.40.50.360">
    <property type="match status" value="1"/>
</dbReference>
<dbReference type="HAMAP" id="MF_00128">
    <property type="entry name" value="NrdI"/>
    <property type="match status" value="1"/>
</dbReference>
<dbReference type="InterPro" id="IPR029039">
    <property type="entry name" value="Flavoprotein-like_sf"/>
</dbReference>
<dbReference type="InterPro" id="IPR020852">
    <property type="entry name" value="RNR_Ib_NrdI_bac"/>
</dbReference>
<dbReference type="InterPro" id="IPR004465">
    <property type="entry name" value="RNR_NrdI"/>
</dbReference>
<dbReference type="NCBIfam" id="TIGR00333">
    <property type="entry name" value="nrdI"/>
    <property type="match status" value="1"/>
</dbReference>
<dbReference type="PANTHER" id="PTHR37297">
    <property type="entry name" value="PROTEIN NRDI"/>
    <property type="match status" value="1"/>
</dbReference>
<dbReference type="PANTHER" id="PTHR37297:SF1">
    <property type="entry name" value="PROTEIN NRDI"/>
    <property type="match status" value="1"/>
</dbReference>
<dbReference type="Pfam" id="PF07972">
    <property type="entry name" value="Flavodoxin_NdrI"/>
    <property type="match status" value="1"/>
</dbReference>
<dbReference type="PIRSF" id="PIRSF005087">
    <property type="entry name" value="NrdI"/>
    <property type="match status" value="1"/>
</dbReference>
<dbReference type="SUPFAM" id="SSF52218">
    <property type="entry name" value="Flavoproteins"/>
    <property type="match status" value="1"/>
</dbReference>
<feature type="chain" id="PRO_0000164304" description="Protein NrdI">
    <location>
        <begin position="1"/>
        <end position="131"/>
    </location>
</feature>
<gene>
    <name evidence="1" type="primary">nrdI</name>
    <name type="ordered locus">BLi01965</name>
    <name type="ordered locus">BL05177</name>
</gene>
<sequence>MIQIVFDSKTGNVQRFVDKTPFRNKRKVSTEEYLDEPFVLITYTTGFGEVPKTTEMFLEKNAHLLLGVAASGNRVWGDNFAKSAEKISKQYQVPILGKFELSGTAKDVELFTQEVERVVTKSSAKMDPVKQ</sequence>
<protein>
    <recommendedName>
        <fullName evidence="1">Protein NrdI</fullName>
    </recommendedName>
</protein>
<name>NRDI_BACLD</name>
<comment type="function">
    <text evidence="1">Probably involved in ribonucleotide reductase function.</text>
</comment>
<comment type="similarity">
    <text evidence="1">Belongs to the NrdI family.</text>
</comment>
<keyword id="KW-1185">Reference proteome</keyword>
<proteinExistence type="inferred from homology"/>
<evidence type="ECO:0000255" key="1">
    <source>
        <dbReference type="HAMAP-Rule" id="MF_00128"/>
    </source>
</evidence>